<dbReference type="EMBL" id="DS027696">
    <property type="protein sequence ID" value="EAW18202.1"/>
    <property type="molecule type" value="Genomic_DNA"/>
</dbReference>
<dbReference type="RefSeq" id="XP_001260099.1">
    <property type="nucleotide sequence ID" value="XM_001260098.1"/>
</dbReference>
<dbReference type="SMR" id="A1DFP5"/>
<dbReference type="STRING" id="331117.A1DFP5"/>
<dbReference type="EnsemblFungi" id="EAW18202">
    <property type="protein sequence ID" value="EAW18202"/>
    <property type="gene ID" value="NFIA_081460"/>
</dbReference>
<dbReference type="GeneID" id="4586655"/>
<dbReference type="KEGG" id="nfi:NFIA_081460"/>
<dbReference type="VEuPathDB" id="FungiDB:NFIA_081460"/>
<dbReference type="eggNOG" id="KOG1818">
    <property type="taxonomic scope" value="Eukaryota"/>
</dbReference>
<dbReference type="HOGENOM" id="CLU_011862_1_0_1"/>
<dbReference type="OMA" id="DQQCSAK"/>
<dbReference type="OrthoDB" id="957735at2759"/>
<dbReference type="Proteomes" id="UP000006702">
    <property type="component" value="Unassembled WGS sequence"/>
</dbReference>
<dbReference type="GO" id="GO:0010008">
    <property type="term" value="C:endosome membrane"/>
    <property type="evidence" value="ECO:0007669"/>
    <property type="project" value="UniProtKB-SubCell"/>
</dbReference>
<dbReference type="GO" id="GO:0033565">
    <property type="term" value="C:ESCRT-0 complex"/>
    <property type="evidence" value="ECO:0007669"/>
    <property type="project" value="TreeGrafter"/>
</dbReference>
<dbReference type="GO" id="GO:0032266">
    <property type="term" value="F:phosphatidylinositol-3-phosphate binding"/>
    <property type="evidence" value="ECO:0007669"/>
    <property type="project" value="TreeGrafter"/>
</dbReference>
<dbReference type="GO" id="GO:0043130">
    <property type="term" value="F:ubiquitin binding"/>
    <property type="evidence" value="ECO:0007669"/>
    <property type="project" value="InterPro"/>
</dbReference>
<dbReference type="GO" id="GO:0008270">
    <property type="term" value="F:zinc ion binding"/>
    <property type="evidence" value="ECO:0007669"/>
    <property type="project" value="UniProtKB-KW"/>
</dbReference>
<dbReference type="GO" id="GO:0006623">
    <property type="term" value="P:protein targeting to vacuole"/>
    <property type="evidence" value="ECO:0007669"/>
    <property type="project" value="TreeGrafter"/>
</dbReference>
<dbReference type="GO" id="GO:0043328">
    <property type="term" value="P:protein transport to vacuole involved in ubiquitin-dependent protein catabolic process via the multivesicular body sorting pathway"/>
    <property type="evidence" value="ECO:0007669"/>
    <property type="project" value="TreeGrafter"/>
</dbReference>
<dbReference type="CDD" id="cd15735">
    <property type="entry name" value="FYVE_spVPS27p_like"/>
    <property type="match status" value="1"/>
</dbReference>
<dbReference type="CDD" id="cd21385">
    <property type="entry name" value="GAT_Vps27"/>
    <property type="match status" value="1"/>
</dbReference>
<dbReference type="CDD" id="cd16979">
    <property type="entry name" value="VHS_Vps27"/>
    <property type="match status" value="1"/>
</dbReference>
<dbReference type="FunFam" id="1.20.5.1940:FF:000001">
    <property type="entry name" value="Vacuolar protein sorting-associated protein 27"/>
    <property type="match status" value="1"/>
</dbReference>
<dbReference type="FunFam" id="1.25.40.90:FF:000031">
    <property type="entry name" value="Vacuolar protein sorting-associated protein 27"/>
    <property type="match status" value="1"/>
</dbReference>
<dbReference type="FunFam" id="3.30.40.10:FF:000161">
    <property type="entry name" value="Vacuolar protein sorting-associated protein 27"/>
    <property type="match status" value="1"/>
</dbReference>
<dbReference type="Gene3D" id="1.20.5.1940">
    <property type="match status" value="1"/>
</dbReference>
<dbReference type="Gene3D" id="1.25.40.90">
    <property type="match status" value="1"/>
</dbReference>
<dbReference type="Gene3D" id="6.10.140.100">
    <property type="match status" value="1"/>
</dbReference>
<dbReference type="Gene3D" id="3.30.40.10">
    <property type="entry name" value="Zinc/RING finger domain, C3HC4 (zinc finger)"/>
    <property type="match status" value="1"/>
</dbReference>
<dbReference type="InterPro" id="IPR008942">
    <property type="entry name" value="ENTH_VHS"/>
</dbReference>
<dbReference type="InterPro" id="IPR017073">
    <property type="entry name" value="HGS/VPS27"/>
</dbReference>
<dbReference type="InterPro" id="IPR003903">
    <property type="entry name" value="UIM_dom"/>
</dbReference>
<dbReference type="InterPro" id="IPR002014">
    <property type="entry name" value="VHS_dom"/>
</dbReference>
<dbReference type="InterPro" id="IPR049425">
    <property type="entry name" value="Vps27_GAT-like"/>
</dbReference>
<dbReference type="InterPro" id="IPR000306">
    <property type="entry name" value="Znf_FYVE"/>
</dbReference>
<dbReference type="InterPro" id="IPR017455">
    <property type="entry name" value="Znf_FYVE-rel"/>
</dbReference>
<dbReference type="InterPro" id="IPR011011">
    <property type="entry name" value="Znf_FYVE_PHD"/>
</dbReference>
<dbReference type="InterPro" id="IPR013083">
    <property type="entry name" value="Znf_RING/FYVE/PHD"/>
</dbReference>
<dbReference type="PANTHER" id="PTHR47794">
    <property type="entry name" value="VACUOLAR PROTEIN SORTING-ASSOCIATED PROTEIN 27"/>
    <property type="match status" value="1"/>
</dbReference>
<dbReference type="PANTHER" id="PTHR47794:SF1">
    <property type="entry name" value="VACUOLAR PROTEIN SORTING-ASSOCIATED PROTEIN 27"/>
    <property type="match status" value="1"/>
</dbReference>
<dbReference type="Pfam" id="PF01363">
    <property type="entry name" value="FYVE"/>
    <property type="match status" value="1"/>
</dbReference>
<dbReference type="Pfam" id="PF02809">
    <property type="entry name" value="UIM"/>
    <property type="match status" value="2"/>
</dbReference>
<dbReference type="Pfam" id="PF00790">
    <property type="entry name" value="VHS"/>
    <property type="match status" value="1"/>
</dbReference>
<dbReference type="Pfam" id="PF21356">
    <property type="entry name" value="Vps27_GAT-like"/>
    <property type="match status" value="1"/>
</dbReference>
<dbReference type="PIRSF" id="PIRSF036956">
    <property type="entry name" value="Hrs_Vps27"/>
    <property type="match status" value="1"/>
</dbReference>
<dbReference type="SMART" id="SM00064">
    <property type="entry name" value="FYVE"/>
    <property type="match status" value="1"/>
</dbReference>
<dbReference type="SMART" id="SM00726">
    <property type="entry name" value="UIM"/>
    <property type="match status" value="2"/>
</dbReference>
<dbReference type="SMART" id="SM00288">
    <property type="entry name" value="VHS"/>
    <property type="match status" value="1"/>
</dbReference>
<dbReference type="SUPFAM" id="SSF48464">
    <property type="entry name" value="ENTH/VHS domain"/>
    <property type="match status" value="1"/>
</dbReference>
<dbReference type="SUPFAM" id="SSF57903">
    <property type="entry name" value="FYVE/PHD zinc finger"/>
    <property type="match status" value="1"/>
</dbReference>
<dbReference type="PROSITE" id="PS50330">
    <property type="entry name" value="UIM"/>
    <property type="match status" value="2"/>
</dbReference>
<dbReference type="PROSITE" id="PS50179">
    <property type="entry name" value="VHS"/>
    <property type="match status" value="1"/>
</dbReference>
<dbReference type="PROSITE" id="PS50178">
    <property type="entry name" value="ZF_FYVE"/>
    <property type="match status" value="1"/>
</dbReference>
<reference key="1">
    <citation type="journal article" date="2008" name="PLoS Genet.">
        <title>Genomic islands in the pathogenic filamentous fungus Aspergillus fumigatus.</title>
        <authorList>
            <person name="Fedorova N.D."/>
            <person name="Khaldi N."/>
            <person name="Joardar V.S."/>
            <person name="Maiti R."/>
            <person name="Amedeo P."/>
            <person name="Anderson M.J."/>
            <person name="Crabtree J."/>
            <person name="Silva J.C."/>
            <person name="Badger J.H."/>
            <person name="Albarraq A."/>
            <person name="Angiuoli S."/>
            <person name="Bussey H."/>
            <person name="Bowyer P."/>
            <person name="Cotty P.J."/>
            <person name="Dyer P.S."/>
            <person name="Egan A."/>
            <person name="Galens K."/>
            <person name="Fraser-Liggett C.M."/>
            <person name="Haas B.J."/>
            <person name="Inman J.M."/>
            <person name="Kent R."/>
            <person name="Lemieux S."/>
            <person name="Malavazi I."/>
            <person name="Orvis J."/>
            <person name="Roemer T."/>
            <person name="Ronning C.M."/>
            <person name="Sundaram J.P."/>
            <person name="Sutton G."/>
            <person name="Turner G."/>
            <person name="Venter J.C."/>
            <person name="White O.R."/>
            <person name="Whitty B.R."/>
            <person name="Youngman P."/>
            <person name="Wolfe K.H."/>
            <person name="Goldman G.H."/>
            <person name="Wortman J.R."/>
            <person name="Jiang B."/>
            <person name="Denning D.W."/>
            <person name="Nierman W.C."/>
        </authorList>
    </citation>
    <scope>NUCLEOTIDE SEQUENCE [LARGE SCALE GENOMIC DNA]</scope>
    <source>
        <strain>ATCC 1020 / DSM 3700 / CBS 544.65 / FGSC A1164 / JCM 1740 / NRRL 181 / WB 181</strain>
    </source>
</reference>
<accession>A1DFP5</accession>
<feature type="chain" id="PRO_0000292519" description="Vacuolar protein sorting-associated protein 27">
    <location>
        <begin position="1"/>
        <end position="729"/>
    </location>
</feature>
<feature type="domain" description="VHS" evidence="4">
    <location>
        <begin position="16"/>
        <end position="147"/>
    </location>
</feature>
<feature type="domain" description="UIM 1" evidence="3">
    <location>
        <begin position="261"/>
        <end position="280"/>
    </location>
</feature>
<feature type="domain" description="UIM 2" evidence="3">
    <location>
        <begin position="307"/>
        <end position="326"/>
    </location>
</feature>
<feature type="zinc finger region" description="FYVE-type; degenerate" evidence="2">
    <location>
        <begin position="165"/>
        <end position="225"/>
    </location>
</feature>
<feature type="region of interest" description="Disordered" evidence="5">
    <location>
        <begin position="276"/>
        <end position="310"/>
    </location>
</feature>
<feature type="region of interest" description="Disordered" evidence="5">
    <location>
        <begin position="323"/>
        <end position="358"/>
    </location>
</feature>
<feature type="region of interest" description="Disordered" evidence="5">
    <location>
        <begin position="485"/>
        <end position="709"/>
    </location>
</feature>
<feature type="compositionally biased region" description="Polar residues" evidence="5">
    <location>
        <begin position="279"/>
        <end position="290"/>
    </location>
</feature>
<feature type="compositionally biased region" description="Low complexity" evidence="5">
    <location>
        <begin position="333"/>
        <end position="352"/>
    </location>
</feature>
<feature type="compositionally biased region" description="Polar residues" evidence="5">
    <location>
        <begin position="497"/>
        <end position="507"/>
    </location>
</feature>
<feature type="compositionally biased region" description="Polar residues" evidence="5">
    <location>
        <begin position="520"/>
        <end position="534"/>
    </location>
</feature>
<feature type="compositionally biased region" description="Pro residues" evidence="5">
    <location>
        <begin position="551"/>
        <end position="560"/>
    </location>
</feature>
<feature type="compositionally biased region" description="Polar residues" evidence="5">
    <location>
        <begin position="626"/>
        <end position="639"/>
    </location>
</feature>
<feature type="compositionally biased region" description="Low complexity" evidence="5">
    <location>
        <begin position="650"/>
        <end position="661"/>
    </location>
</feature>
<feature type="compositionally biased region" description="Polar residues" evidence="5">
    <location>
        <begin position="671"/>
        <end position="688"/>
    </location>
</feature>
<organism>
    <name type="scientific">Neosartorya fischeri (strain ATCC 1020 / DSM 3700 / CBS 544.65 / FGSC A1164 / JCM 1740 / NRRL 181 / WB 181)</name>
    <name type="common">Aspergillus fischerianus</name>
    <dbReference type="NCBI Taxonomy" id="331117"/>
    <lineage>
        <taxon>Eukaryota</taxon>
        <taxon>Fungi</taxon>
        <taxon>Dikarya</taxon>
        <taxon>Ascomycota</taxon>
        <taxon>Pezizomycotina</taxon>
        <taxon>Eurotiomycetes</taxon>
        <taxon>Eurotiomycetidae</taxon>
        <taxon>Eurotiales</taxon>
        <taxon>Aspergillaceae</taxon>
        <taxon>Aspergillus</taxon>
        <taxon>Aspergillus subgen. Fumigati</taxon>
    </lineage>
</organism>
<keyword id="KW-0967">Endosome</keyword>
<keyword id="KW-0472">Membrane</keyword>
<keyword id="KW-0479">Metal-binding</keyword>
<keyword id="KW-1185">Reference proteome</keyword>
<keyword id="KW-0677">Repeat</keyword>
<keyword id="KW-0862">Zinc</keyword>
<keyword id="KW-0863">Zinc-finger</keyword>
<name>VPS27_NEOFI</name>
<proteinExistence type="inferred from homology"/>
<comment type="function">
    <text evidence="1">Component of the ESCRT-0 complex which is the sorting receptor for ubiquitinated cargo proteins at the multivesicular body (MVB) and recruits ESCRT-I to the MVB outer membrane.</text>
</comment>
<comment type="subunit">
    <text>Component of the ESCRT-0 complex composed of HSE1 and VPS27.</text>
</comment>
<comment type="subcellular location">
    <subcellularLocation>
        <location evidence="1">Endosome membrane</location>
        <topology evidence="1">Peripheral membrane protein</topology>
        <orientation evidence="1">Cytoplasmic side</orientation>
    </subcellularLocation>
</comment>
<comment type="domain">
    <text>The FYVE domain is involved in the binding to phosphatidylinositol 3-phosphate (PtdIns(3)P) which is required for the association to endosomal membranes.</text>
</comment>
<comment type="domain">
    <text evidence="1">Both IUM domains are necessary for efficient binding to ubiquitin.</text>
</comment>
<comment type="similarity">
    <text evidence="6">Belongs to the VPS27 family.</text>
</comment>
<sequence>MAGWFSSTSLLDEQVERATSSSLEDIALNLEISDLIRSKSVQPKEAMRSLKRRLENRNPNVQIATLKLTDTCVKNGGSHFLAEIASREFMDNLVSLLTTEGAPLNTDVKEKMLELIQDWAMAAQGRMDLNYLGETYRRLQSEGFRFPPKNEISGSMLESSAPPEWIDSDVCMRCRTPFSFMNRKHHCRNCGNVFDAQCSSKTLPLPHLGILQPVRVDDGCYAKLTSKSSLPSNLSDRSAFKNHSITKANAMEPRGARAEGGFDDDLRRALQLSLEEAQNKGSSGYVPSTRINDEPAKTTTQANHEEEEDADLKAAIEASLRDMEEHKKKHAAALKSNAAATDSSARDTTAATPLPKNPYELSPVEVENIHLFAALVDRLQHQPPGTILREPQIQELYESIGALRPKLARSYGETMSKHDTLLDLHAKLSTVVRYYDRMLEERLSSAYSQHSLGYGTVPGGSPYPNMYPTMPSHVPEGKTGAENFYYGNPVADRAPPVNNTYGYPQSSRDIREPAAAPSGPISSGMYNQPSQAVPQNPPWNGNAPSVASPQPSAPSTPFPNNPSGYPGPSASTQYYASAPHPEQDPNAYSSPRPGETDISHQPSPIMRRDSYYQSAGAPVTARASAPEQSPPTDQGQSPAYMQYGDSHPVQSTGQPTPQYQPTAPPPQSYYFQHQPQQSAPLPTHSQTPGAPHGTYPGGDVSPISAPAHAVHYQQVAPTKPAVEESLIEL</sequence>
<protein>
    <recommendedName>
        <fullName>Vacuolar protein sorting-associated protein 27</fullName>
    </recommendedName>
</protein>
<gene>
    <name type="primary">vps27</name>
    <name type="ORF">NFIA_081460</name>
</gene>
<evidence type="ECO:0000250" key="1"/>
<evidence type="ECO:0000255" key="2">
    <source>
        <dbReference type="PROSITE-ProRule" id="PRU00091"/>
    </source>
</evidence>
<evidence type="ECO:0000255" key="3">
    <source>
        <dbReference type="PROSITE-ProRule" id="PRU00213"/>
    </source>
</evidence>
<evidence type="ECO:0000255" key="4">
    <source>
        <dbReference type="PROSITE-ProRule" id="PRU00218"/>
    </source>
</evidence>
<evidence type="ECO:0000256" key="5">
    <source>
        <dbReference type="SAM" id="MobiDB-lite"/>
    </source>
</evidence>
<evidence type="ECO:0000305" key="6"/>